<accession>B5GW45</accession>
<feature type="chain" id="PRO_0000418478" description="(+)-T-muurolol synthase ((2E,6E)-farnesyl diphosphate cyclizing)">
    <location>
        <begin position="1"/>
        <end position="418"/>
    </location>
</feature>
<feature type="region of interest" description="Disordered" evidence="3">
    <location>
        <begin position="354"/>
        <end position="418"/>
    </location>
</feature>
<feature type="short sequence motif" description="DDXXXD motif" evidence="1">
    <location>
        <begin position="83"/>
        <end position="88"/>
    </location>
</feature>
<feature type="compositionally biased region" description="Polar residues" evidence="3">
    <location>
        <begin position="402"/>
        <end position="412"/>
    </location>
</feature>
<feature type="binding site" evidence="2">
    <location>
        <position position="83"/>
    </location>
    <ligand>
        <name>Mg(2+)</name>
        <dbReference type="ChEBI" id="CHEBI:18420"/>
        <label>1</label>
    </ligand>
</feature>
<feature type="binding site" evidence="2">
    <location>
        <position position="88"/>
    </location>
    <ligand>
        <name>Mg(2+)</name>
        <dbReference type="ChEBI" id="CHEBI:18420"/>
        <label>1</label>
    </ligand>
</feature>
<feature type="binding site" evidence="2">
    <location>
        <position position="88"/>
    </location>
    <ligand>
        <name>Mg(2+)</name>
        <dbReference type="ChEBI" id="CHEBI:18420"/>
        <label>2</label>
    </ligand>
</feature>
<feature type="binding site" evidence="2">
    <location>
        <position position="179"/>
    </location>
    <ligand>
        <name>substrate</name>
    </ligand>
</feature>
<feature type="binding site" evidence="2">
    <location>
        <position position="225"/>
    </location>
    <ligand>
        <name>Mg(2+)</name>
        <dbReference type="ChEBI" id="CHEBI:18420"/>
        <label>3</label>
    </ligand>
</feature>
<feature type="binding site" evidence="2">
    <location>
        <position position="229"/>
    </location>
    <ligand>
        <name>Mg(2+)</name>
        <dbReference type="ChEBI" id="CHEBI:18420"/>
        <label>3</label>
    </ligand>
</feature>
<feature type="binding site" evidence="2">
    <location>
        <position position="232"/>
    </location>
    <ligand>
        <name>substrate</name>
    </ligand>
</feature>
<feature type="binding site" evidence="2">
    <location>
        <position position="233"/>
    </location>
    <ligand>
        <name>Mg(2+)</name>
        <dbReference type="ChEBI" id="CHEBI:18420"/>
        <label>3</label>
    </ligand>
</feature>
<feature type="binding site" evidence="2">
    <location>
        <begin position="312"/>
        <end position="313"/>
    </location>
    <ligand>
        <name>substrate</name>
    </ligand>
</feature>
<feature type="site" description="Plays a critical role in the stabilization of intermediate cation" evidence="2">
    <location>
        <position position="80"/>
    </location>
</feature>
<feature type="site" description="Plays a critical role for substrate recognition" evidence="2">
    <location>
        <position position="84"/>
    </location>
</feature>
<feature type="site" description="Plays a critical role for substrate recognition" evidence="2">
    <location>
        <position position="159"/>
    </location>
</feature>
<feature type="site" description="Plays a critical role for abstraction of the pyrophosphate group" evidence="2">
    <location>
        <position position="183"/>
    </location>
</feature>
<sequence>MSLNHSDLMFYCPVDDLPHPAASGVNDRTLDWASGQGIPTADRDAGRLRAMAPGLLAARIAPDARGPVLDAFADHHTWLFAFDDEYCDRADGSGITEWASFLARLHRVVETGESALLPGNPYGLALRDIACRLSTYTTPAQLAEWLEALRSYFAALVWERSRRRDDDRLQSLDDYLLLRLRNGAMHTSITLLDTVNGYVLPRELRETPGVRALVEMTALLVSVDNDILSHHKESTSGTREANLLDVLGRTGHTTPGEAVAQAVALRNEIMRQFVRVAERVRTPAAVPELYRFTTGLARWIRANLDFSLTTTRYTGPVTERAALSPHEVPPLSGQGPAPARSDVIGWWWRIPEPLPEPGSDGADTPVRKRRAGDRPPTAGRGGAPHHQRTGPPPPVLPGGITASRSSGLQQSTWRREHR</sequence>
<evidence type="ECO:0000250" key="1">
    <source>
        <dbReference type="UniProtKB" id="A7NH01"/>
    </source>
</evidence>
<evidence type="ECO:0000250" key="2">
    <source>
        <dbReference type="UniProtKB" id="B5HDJ6"/>
    </source>
</evidence>
<evidence type="ECO:0000256" key="3">
    <source>
        <dbReference type="SAM" id="MobiDB-lite"/>
    </source>
</evidence>
<evidence type="ECO:0000269" key="4">
    <source>
    </source>
</evidence>
<evidence type="ECO:0000303" key="5">
    <source>
    </source>
</evidence>
<evidence type="ECO:0000305" key="6"/>
<name>TMUUS_STRCL</name>
<proteinExistence type="evidence at protein level"/>
<organism>
    <name type="scientific">Streptomyces clavuligerus</name>
    <dbReference type="NCBI Taxonomy" id="1901"/>
    <lineage>
        <taxon>Bacteria</taxon>
        <taxon>Bacillati</taxon>
        <taxon>Actinomycetota</taxon>
        <taxon>Actinomycetes</taxon>
        <taxon>Kitasatosporales</taxon>
        <taxon>Streptomycetaceae</taxon>
        <taxon>Streptomyces</taxon>
    </lineage>
</organism>
<gene>
    <name type="ORF">SCLAV_p0068</name>
    <name type="ORF">SSCG_03688</name>
</gene>
<protein>
    <recommendedName>
        <fullName evidence="5">(+)-T-muurolol synthase ((2E,6E)-farnesyl diphosphate cyclizing)</fullName>
        <ecNumber evidence="4">4.2.3.98</ecNumber>
    </recommendedName>
    <alternativeName>
        <fullName evidence="5">Terpene cyclase</fullName>
    </alternativeName>
    <alternativeName>
        <fullName evidence="5">Type I terpene synthase</fullName>
    </alternativeName>
</protein>
<keyword id="KW-0456">Lyase</keyword>
<keyword id="KW-0460">Magnesium</keyword>
<keyword id="KW-0479">Metal-binding</keyword>
<keyword id="KW-0614">Plasmid</keyword>
<keyword id="KW-1185">Reference proteome</keyword>
<geneLocation type="plasmid">
    <name>pSCL4</name>
</geneLocation>
<dbReference type="EC" id="4.2.3.98" evidence="4"/>
<dbReference type="EMBL" id="CM000914">
    <property type="protein sequence ID" value="EFG03561.2"/>
    <property type="molecule type" value="Genomic_DNA"/>
</dbReference>
<dbReference type="EMBL" id="DS570654">
    <property type="protein sequence ID" value="EDY50541.1"/>
    <property type="molecule type" value="Genomic_DNA"/>
</dbReference>
<dbReference type="RefSeq" id="WP_003956090.1">
    <property type="nucleotide sequence ID" value="NZ_CM000914.1"/>
</dbReference>
<dbReference type="SMR" id="B5GW45"/>
<dbReference type="GeneID" id="93733323"/>
<dbReference type="KEGG" id="ag:EFG03561"/>
<dbReference type="eggNOG" id="COG3170">
    <property type="taxonomic scope" value="Bacteria"/>
</dbReference>
<dbReference type="OrthoDB" id="2989600at2"/>
<dbReference type="BRENDA" id="4.2.3.98">
    <property type="organism ID" value="5988"/>
</dbReference>
<dbReference type="UniPathway" id="UPA00213"/>
<dbReference type="Proteomes" id="UP000002357">
    <property type="component" value="Plasmid pSCL4"/>
</dbReference>
<dbReference type="GO" id="GO:0046872">
    <property type="term" value="F:metal ion binding"/>
    <property type="evidence" value="ECO:0007669"/>
    <property type="project" value="UniProtKB-KW"/>
</dbReference>
<dbReference type="GO" id="GO:0010333">
    <property type="term" value="F:terpene synthase activity"/>
    <property type="evidence" value="ECO:0007669"/>
    <property type="project" value="InterPro"/>
</dbReference>
<dbReference type="GO" id="GO:0016114">
    <property type="term" value="P:terpenoid biosynthetic process"/>
    <property type="evidence" value="ECO:0007669"/>
    <property type="project" value="UniProtKB-UniPathway"/>
</dbReference>
<dbReference type="Gene3D" id="1.10.600.10">
    <property type="entry name" value="Farnesyl Diphosphate Synthase"/>
    <property type="match status" value="1"/>
</dbReference>
<dbReference type="InterPro" id="IPR008949">
    <property type="entry name" value="Isoprenoid_synthase_dom_sf"/>
</dbReference>
<dbReference type="InterPro" id="IPR034686">
    <property type="entry name" value="Terpene_cyclase-like_2"/>
</dbReference>
<dbReference type="PANTHER" id="PTHR35201:SF4">
    <property type="entry name" value="BETA-PINACENE SYNTHASE-RELATED"/>
    <property type="match status" value="1"/>
</dbReference>
<dbReference type="PANTHER" id="PTHR35201">
    <property type="entry name" value="TERPENE SYNTHASE"/>
    <property type="match status" value="1"/>
</dbReference>
<dbReference type="Pfam" id="PF19086">
    <property type="entry name" value="Terpene_syn_C_2"/>
    <property type="match status" value="1"/>
</dbReference>
<dbReference type="SFLD" id="SFLDS00005">
    <property type="entry name" value="Isoprenoid_Synthase_Type_I"/>
    <property type="match status" value="1"/>
</dbReference>
<dbReference type="SFLD" id="SFLDG01020">
    <property type="entry name" value="Terpene_Cyclase_Like_2"/>
    <property type="match status" value="1"/>
</dbReference>
<dbReference type="SUPFAM" id="SSF48576">
    <property type="entry name" value="Terpenoid synthases"/>
    <property type="match status" value="1"/>
</dbReference>
<reference key="1">
    <citation type="journal article" date="2010" name="Genome Biol. Evol.">
        <title>The sequence of a 1.8-mb bacterial linear plasmid reveals a rich evolutionary reservoir of secondary metabolic pathways.</title>
        <authorList>
            <person name="Medema M.H."/>
            <person name="Trefzer A."/>
            <person name="Kovalchuk A."/>
            <person name="van den Berg M."/>
            <person name="Mueller U."/>
            <person name="Heijne W."/>
            <person name="Wu L."/>
            <person name="Alam M.T."/>
            <person name="Ronning C.M."/>
            <person name="Nierman W.C."/>
            <person name="Bovenberg R.A.L."/>
            <person name="Breitling R."/>
            <person name="Takano E."/>
        </authorList>
    </citation>
    <scope>NUCLEOTIDE SEQUENCE [LARGE SCALE GENOMIC DNA]</scope>
    <source>
        <strain>ATCC 27064 / DSM 738 / JCM 4710 / NBRC 13307 / NCIMB 12785 / NRRL 3585 / VKM Ac-602</strain>
        <plasmid>pSCL4</plasmid>
    </source>
</reference>
<reference key="2">
    <citation type="submission" date="2008-02" db="EMBL/GenBank/DDBJ databases">
        <title>Annotation of Streptomyces clavuligerus ATCC 27064.</title>
        <authorList>
            <person name="Fischbach M."/>
            <person name="Ward D."/>
            <person name="Young S."/>
            <person name="Jaffe D."/>
            <person name="Gnerre S."/>
            <person name="Berlin A."/>
            <person name="Heiman D."/>
            <person name="Hepburn T."/>
            <person name="Sykes S."/>
            <person name="Alvarado L."/>
            <person name="Kodira C.D."/>
            <person name="Straight P."/>
            <person name="Clardy J."/>
            <person name="Hung D."/>
            <person name="Kolter R."/>
            <person name="Mekalanos J."/>
            <person name="Walker S."/>
            <person name="Walsh C.T."/>
            <person name="Lander E."/>
            <person name="Galagan J."/>
            <person name="Nusbaum C."/>
            <person name="Birren B."/>
        </authorList>
    </citation>
    <scope>NUCLEOTIDE SEQUENCE [LARGE SCALE GENOMIC DNA]</scope>
    <source>
        <strain>ATCC 27064 / DSM 738 / JCM 4710 / NBRC 13307 / NCIMB 12785 / NRRL 3585 / VKM Ac-602</strain>
    </source>
</reference>
<reference key="3">
    <citation type="journal article" date="2011" name="Chem. Biol.">
        <title>Genome mining in Streptomyces clavuligerus: expression and biochemical characterization of two new cryptic sesquiterpene synthases.</title>
        <authorList>
            <person name="Hu Y."/>
            <person name="Chou W.K."/>
            <person name="Hopson R."/>
            <person name="Cane D.E."/>
        </authorList>
    </citation>
    <scope>FUNCTION</scope>
    <scope>CATALYTIC ACTIVITY</scope>
    <scope>BIOPHYSICOCHEMICAL PROPERTIES</scope>
    <scope>REACTION MECHANISM</scope>
    <source>
        <strain>ATCC 27064 / DSM 738 / JCM 4710 / NBRC 13307 / NCIMB 12785 / NRRL 3585 / VKM Ac-602</strain>
    </source>
</reference>
<comment type="function">
    <text evidence="4">Catalyzes the conversion of (2E,6E)-farnesyl diphosphate (FPP) into (+)-T-muurolol via a 1,10-cyclization, which requires isomerization of FPP to nerolidyl diphosphate (NPP) and then abstraction of the pyrophosphate from intermediate NPP leading to a (E,Z)-germacradienyl (helminthogermacradienyl) cation.</text>
</comment>
<comment type="catalytic activity">
    <reaction evidence="4">
        <text>(2E,6E)-farnesyl diphosphate + H2O = (+)-T-muurolol + diphosphate</text>
        <dbReference type="Rhea" id="RHEA:32011"/>
        <dbReference type="ChEBI" id="CHEBI:15377"/>
        <dbReference type="ChEBI" id="CHEBI:33019"/>
        <dbReference type="ChEBI" id="CHEBI:63704"/>
        <dbReference type="ChEBI" id="CHEBI:175763"/>
        <dbReference type="EC" id="4.2.3.98"/>
    </reaction>
</comment>
<comment type="cofactor">
    <cofactor evidence="2">
        <name>Mg(2+)</name>
        <dbReference type="ChEBI" id="CHEBI:18420"/>
    </cofactor>
    <text evidence="2">Binds 3 Mg(2+) ions per subunit.</text>
</comment>
<comment type="biophysicochemical properties">
    <kinetics>
        <KM evidence="4">2.7 uM for (2E,6E)-farnesyl diphosphate</KM>
        <text evidence="4">kcat is 0.00163 sec(-1).</text>
    </kinetics>
</comment>
<comment type="pathway">
    <text evidence="1">Secondary metabolite biosynthesis; terpenoid biosynthesis.</text>
</comment>
<comment type="domain">
    <text evidence="1">The Asp-Asp-Xaa-Xaa-Xaa-Asp (DDXXXD) motif is important for the catalytic activity, presumably through binding to Mg(2+).</text>
</comment>
<comment type="similarity">
    <text evidence="6">Belongs to the terpene synthase family.</text>
</comment>